<feature type="chain" id="PRO_1000045437" description="High frequency lysogenization protein HflD homolog">
    <location>
        <begin position="1"/>
        <end position="204"/>
    </location>
</feature>
<proteinExistence type="inferred from homology"/>
<dbReference type="EMBL" id="CP000507">
    <property type="protein sequence ID" value="ABM00269.1"/>
    <property type="molecule type" value="Genomic_DNA"/>
</dbReference>
<dbReference type="RefSeq" id="WP_011760176.1">
    <property type="nucleotide sequence ID" value="NC_008700.1"/>
</dbReference>
<dbReference type="SMR" id="A1S7B2"/>
<dbReference type="STRING" id="326297.Sama_2063"/>
<dbReference type="KEGG" id="saz:Sama_2063"/>
<dbReference type="eggNOG" id="COG2915">
    <property type="taxonomic scope" value="Bacteria"/>
</dbReference>
<dbReference type="HOGENOM" id="CLU_098920_0_0_6"/>
<dbReference type="OrthoDB" id="9788031at2"/>
<dbReference type="Proteomes" id="UP000009175">
    <property type="component" value="Chromosome"/>
</dbReference>
<dbReference type="GO" id="GO:0005737">
    <property type="term" value="C:cytoplasm"/>
    <property type="evidence" value="ECO:0007669"/>
    <property type="project" value="UniProtKB-SubCell"/>
</dbReference>
<dbReference type="GO" id="GO:0005886">
    <property type="term" value="C:plasma membrane"/>
    <property type="evidence" value="ECO:0007669"/>
    <property type="project" value="UniProtKB-SubCell"/>
</dbReference>
<dbReference type="Gene3D" id="1.10.3890.10">
    <property type="entry name" value="HflD-like"/>
    <property type="match status" value="1"/>
</dbReference>
<dbReference type="HAMAP" id="MF_00695">
    <property type="entry name" value="HflD_protein"/>
    <property type="match status" value="1"/>
</dbReference>
<dbReference type="InterPro" id="IPR007451">
    <property type="entry name" value="HflD"/>
</dbReference>
<dbReference type="InterPro" id="IPR035932">
    <property type="entry name" value="HflD-like_sf"/>
</dbReference>
<dbReference type="NCBIfam" id="NF001246">
    <property type="entry name" value="PRK00218.1-2"/>
    <property type="match status" value="1"/>
</dbReference>
<dbReference type="NCBIfam" id="NF001248">
    <property type="entry name" value="PRK00218.1-4"/>
    <property type="match status" value="1"/>
</dbReference>
<dbReference type="PANTHER" id="PTHR38100">
    <property type="entry name" value="HIGH FREQUENCY LYSOGENIZATION PROTEIN HFLD"/>
    <property type="match status" value="1"/>
</dbReference>
<dbReference type="PANTHER" id="PTHR38100:SF1">
    <property type="entry name" value="HIGH FREQUENCY LYSOGENIZATION PROTEIN HFLD"/>
    <property type="match status" value="1"/>
</dbReference>
<dbReference type="Pfam" id="PF04356">
    <property type="entry name" value="DUF489"/>
    <property type="match status" value="1"/>
</dbReference>
<dbReference type="SUPFAM" id="SSF101322">
    <property type="entry name" value="YcfC-like"/>
    <property type="match status" value="1"/>
</dbReference>
<gene>
    <name evidence="1" type="primary">hflD</name>
    <name type="ordered locus">Sama_2063</name>
</gene>
<name>HFLD_SHEAM</name>
<protein>
    <recommendedName>
        <fullName evidence="1">High frequency lysogenization protein HflD homolog</fullName>
    </recommendedName>
</protein>
<keyword id="KW-0997">Cell inner membrane</keyword>
<keyword id="KW-1003">Cell membrane</keyword>
<keyword id="KW-0963">Cytoplasm</keyword>
<keyword id="KW-0472">Membrane</keyword>
<keyword id="KW-1185">Reference proteome</keyword>
<organism>
    <name type="scientific">Shewanella amazonensis (strain ATCC BAA-1098 / SB2B)</name>
    <dbReference type="NCBI Taxonomy" id="326297"/>
    <lineage>
        <taxon>Bacteria</taxon>
        <taxon>Pseudomonadati</taxon>
        <taxon>Pseudomonadota</taxon>
        <taxon>Gammaproteobacteria</taxon>
        <taxon>Alteromonadales</taxon>
        <taxon>Shewanellaceae</taxon>
        <taxon>Shewanella</taxon>
    </lineage>
</organism>
<reference key="1">
    <citation type="submission" date="2006-12" db="EMBL/GenBank/DDBJ databases">
        <title>Complete sequence of Shewanella amazonensis SB2B.</title>
        <authorList>
            <consortium name="US DOE Joint Genome Institute"/>
            <person name="Copeland A."/>
            <person name="Lucas S."/>
            <person name="Lapidus A."/>
            <person name="Barry K."/>
            <person name="Detter J.C."/>
            <person name="Glavina del Rio T."/>
            <person name="Hammon N."/>
            <person name="Israni S."/>
            <person name="Dalin E."/>
            <person name="Tice H."/>
            <person name="Pitluck S."/>
            <person name="Munk A.C."/>
            <person name="Brettin T."/>
            <person name="Bruce D."/>
            <person name="Han C."/>
            <person name="Tapia R."/>
            <person name="Gilna P."/>
            <person name="Schmutz J."/>
            <person name="Larimer F."/>
            <person name="Land M."/>
            <person name="Hauser L."/>
            <person name="Kyrpides N."/>
            <person name="Mikhailova N."/>
            <person name="Fredrickson J."/>
            <person name="Richardson P."/>
        </authorList>
    </citation>
    <scope>NUCLEOTIDE SEQUENCE [LARGE SCALE GENOMIC DNA]</scope>
    <source>
        <strain>ATCC BAA-1098 / SB2B</strain>
    </source>
</reference>
<comment type="subcellular location">
    <subcellularLocation>
        <location>Cytoplasm</location>
    </subcellularLocation>
    <subcellularLocation>
        <location evidence="1">Cell inner membrane</location>
        <topology evidence="1">Peripheral membrane protein</topology>
        <orientation evidence="1">Cytoplasmic side</orientation>
    </subcellularLocation>
</comment>
<comment type="similarity">
    <text evidence="1">Belongs to the HflD family.</text>
</comment>
<accession>A1S7B2</accession>
<sequence length="204" mass="22824">MSQMQARTMAFAGILQALAQVQYIARHGDSDTDAMAASFNTIMVTNPEQPEDVYADKDQLRVGYKWILNQLGDGESKDVEMTRYLVGLLALERKLSRSNAALGMLSERINQIHRQLNHFAITDEQVIANLASIYSDIISNLGPKLQITGNPNVLQRPLVQQKIRALLLAAMRSAVLWRQLGGKRRHLVFARKAIVDTAKKNLTL</sequence>
<evidence type="ECO:0000255" key="1">
    <source>
        <dbReference type="HAMAP-Rule" id="MF_00695"/>
    </source>
</evidence>